<gene>
    <name evidence="1" type="primary">pepB</name>
    <name type="ordered locus">BWG_2287</name>
</gene>
<sequence length="427" mass="46180">MTEAMKITLSTQPADARWGEKATYSINNDGITLHLNGADDLGLIQRAARKIDGLGIKHVQLSGEGWDADRCWAFWQGYKAPKGTRKVVWPDLDDAQRQELDNRLMIIDWVRDTINAPAEELGPSQLAQRAVDLISNVAGDRVTYRITKGEDLREQGYMGLHTVGRGSERSPVLLALDYNPTGDKEAPVYACLVGKGITFDSGGYSIKQTAFMDSMKSDMGGAATVTGALAFAITRGLNKRVKLFLCCADNLISGNAFKLGDIITYRNGKKVEVMNTDAEGRLVLADGLIDASAQKPEMIIDAATLTGAAKTALGNDYHALFSFDDALAGRLLASAAQENEPFWRLPLAEFHRSQLPSNFAELNNTGSAAYPAGASTAAGFLSHFVENYQQGWLHIDCSATYRKAPVEQWSAGATGLGVRTIANLLTA</sequence>
<reference key="1">
    <citation type="journal article" date="2009" name="J. Bacteriol.">
        <title>Genomic sequencing reveals regulatory mutations and recombinational events in the widely used MC4100 lineage of Escherichia coli K-12.</title>
        <authorList>
            <person name="Ferenci T."/>
            <person name="Zhou Z."/>
            <person name="Betteridge T."/>
            <person name="Ren Y."/>
            <person name="Liu Y."/>
            <person name="Feng L."/>
            <person name="Reeves P.R."/>
            <person name="Wang L."/>
        </authorList>
    </citation>
    <scope>NUCLEOTIDE SEQUENCE [LARGE SCALE GENOMIC DNA]</scope>
    <source>
        <strain>K12 / MC4100 / BW2952</strain>
    </source>
</reference>
<organism>
    <name type="scientific">Escherichia coli (strain K12 / MC4100 / BW2952)</name>
    <dbReference type="NCBI Taxonomy" id="595496"/>
    <lineage>
        <taxon>Bacteria</taxon>
        <taxon>Pseudomonadati</taxon>
        <taxon>Pseudomonadota</taxon>
        <taxon>Gammaproteobacteria</taxon>
        <taxon>Enterobacterales</taxon>
        <taxon>Enterobacteriaceae</taxon>
        <taxon>Escherichia</taxon>
    </lineage>
</organism>
<dbReference type="EC" id="3.4.11.23" evidence="1"/>
<dbReference type="EMBL" id="CP001396">
    <property type="protein sequence ID" value="ACR61980.1"/>
    <property type="molecule type" value="Genomic_DNA"/>
</dbReference>
<dbReference type="RefSeq" id="WP_000133592.1">
    <property type="nucleotide sequence ID" value="NC_012759.1"/>
</dbReference>
<dbReference type="SMR" id="C4ZX98"/>
<dbReference type="MEROPS" id="M17.004"/>
<dbReference type="KEGG" id="ebw:BWG_2287"/>
<dbReference type="HOGENOM" id="CLU_013734_7_1_6"/>
<dbReference type="GO" id="GO:0005737">
    <property type="term" value="C:cytoplasm"/>
    <property type="evidence" value="ECO:0007669"/>
    <property type="project" value="UniProtKB-SubCell"/>
</dbReference>
<dbReference type="GO" id="GO:0030145">
    <property type="term" value="F:manganese ion binding"/>
    <property type="evidence" value="ECO:0007669"/>
    <property type="project" value="UniProtKB-UniRule"/>
</dbReference>
<dbReference type="GO" id="GO:0070006">
    <property type="term" value="F:metalloaminopeptidase activity"/>
    <property type="evidence" value="ECO:0007669"/>
    <property type="project" value="InterPro"/>
</dbReference>
<dbReference type="GO" id="GO:0006508">
    <property type="term" value="P:proteolysis"/>
    <property type="evidence" value="ECO:0007669"/>
    <property type="project" value="UniProtKB-UniRule"/>
</dbReference>
<dbReference type="CDD" id="cd00433">
    <property type="entry name" value="Peptidase_M17"/>
    <property type="match status" value="1"/>
</dbReference>
<dbReference type="FunFam" id="3.40.630.10:FF:000037">
    <property type="entry name" value="Peptidase B"/>
    <property type="match status" value="1"/>
</dbReference>
<dbReference type="Gene3D" id="3.40.630.10">
    <property type="entry name" value="Zn peptidases"/>
    <property type="match status" value="1"/>
</dbReference>
<dbReference type="HAMAP" id="MF_00504">
    <property type="entry name" value="Aminopeptidase_M17"/>
    <property type="match status" value="1"/>
</dbReference>
<dbReference type="InterPro" id="IPR011356">
    <property type="entry name" value="Leucine_aapep/pepB"/>
</dbReference>
<dbReference type="InterPro" id="IPR047620">
    <property type="entry name" value="M17_PepB-like_N"/>
</dbReference>
<dbReference type="InterPro" id="IPR008330">
    <property type="entry name" value="Pept_M17_PepB"/>
</dbReference>
<dbReference type="InterPro" id="IPR000819">
    <property type="entry name" value="Peptidase_M17_C"/>
</dbReference>
<dbReference type="NCBIfam" id="NF003450">
    <property type="entry name" value="PRK05015.1"/>
    <property type="match status" value="1"/>
</dbReference>
<dbReference type="PANTHER" id="PTHR11963">
    <property type="entry name" value="LEUCINE AMINOPEPTIDASE-RELATED"/>
    <property type="match status" value="1"/>
</dbReference>
<dbReference type="PANTHER" id="PTHR11963:SF20">
    <property type="entry name" value="PEPTIDASE B"/>
    <property type="match status" value="1"/>
</dbReference>
<dbReference type="Pfam" id="PF12404">
    <property type="entry name" value="DUF3663"/>
    <property type="match status" value="1"/>
</dbReference>
<dbReference type="Pfam" id="PF00883">
    <property type="entry name" value="Peptidase_M17"/>
    <property type="match status" value="1"/>
</dbReference>
<dbReference type="PIRSF" id="PIRSF036388">
    <property type="entry name" value="Ctsl_amnpptdse_B"/>
    <property type="match status" value="1"/>
</dbReference>
<dbReference type="PRINTS" id="PR00481">
    <property type="entry name" value="LAMNOPPTDASE"/>
</dbReference>
<dbReference type="SUPFAM" id="SSF53187">
    <property type="entry name" value="Zn-dependent exopeptidases"/>
    <property type="match status" value="1"/>
</dbReference>
<dbReference type="PROSITE" id="PS00631">
    <property type="entry name" value="CYTOSOL_AP"/>
    <property type="match status" value="1"/>
</dbReference>
<protein>
    <recommendedName>
        <fullName evidence="1">Peptidase B</fullName>
        <ecNumber evidence="1">3.4.11.23</ecNumber>
    </recommendedName>
    <alternativeName>
        <fullName evidence="1">Aminopeptidase B</fullName>
    </alternativeName>
</protein>
<name>PEPB_ECOBW</name>
<keyword id="KW-0031">Aminopeptidase</keyword>
<keyword id="KW-0963">Cytoplasm</keyword>
<keyword id="KW-0378">Hydrolase</keyword>
<keyword id="KW-0464">Manganese</keyword>
<keyword id="KW-0479">Metal-binding</keyword>
<keyword id="KW-0645">Protease</keyword>
<evidence type="ECO:0000255" key="1">
    <source>
        <dbReference type="HAMAP-Rule" id="MF_00504"/>
    </source>
</evidence>
<feature type="chain" id="PRO_1000206566" description="Peptidase B">
    <location>
        <begin position="1"/>
        <end position="427"/>
    </location>
</feature>
<feature type="active site" evidence="1">
    <location>
        <position position="207"/>
    </location>
</feature>
<feature type="active site" evidence="1">
    <location>
        <position position="281"/>
    </location>
</feature>
<feature type="binding site" evidence="1">
    <location>
        <position position="195"/>
    </location>
    <ligand>
        <name>Mn(2+)</name>
        <dbReference type="ChEBI" id="CHEBI:29035"/>
        <label>2</label>
    </ligand>
</feature>
<feature type="binding site" evidence="1">
    <location>
        <position position="200"/>
    </location>
    <ligand>
        <name>Mn(2+)</name>
        <dbReference type="ChEBI" id="CHEBI:29035"/>
        <label>1</label>
    </ligand>
</feature>
<feature type="binding site" evidence="1">
    <location>
        <position position="200"/>
    </location>
    <ligand>
        <name>Mn(2+)</name>
        <dbReference type="ChEBI" id="CHEBI:29035"/>
        <label>2</label>
    </ligand>
</feature>
<feature type="binding site" evidence="1">
    <location>
        <position position="218"/>
    </location>
    <ligand>
        <name>Mn(2+)</name>
        <dbReference type="ChEBI" id="CHEBI:29035"/>
        <label>2</label>
    </ligand>
</feature>
<feature type="binding site" evidence="1">
    <location>
        <position position="277"/>
    </location>
    <ligand>
        <name>Mn(2+)</name>
        <dbReference type="ChEBI" id="CHEBI:29035"/>
        <label>1</label>
    </ligand>
</feature>
<feature type="binding site" evidence="1">
    <location>
        <position position="279"/>
    </location>
    <ligand>
        <name>Mn(2+)</name>
        <dbReference type="ChEBI" id="CHEBI:29035"/>
        <label>1</label>
    </ligand>
</feature>
<feature type="binding site" evidence="1">
    <location>
        <position position="279"/>
    </location>
    <ligand>
        <name>Mn(2+)</name>
        <dbReference type="ChEBI" id="CHEBI:29035"/>
        <label>2</label>
    </ligand>
</feature>
<comment type="function">
    <text evidence="1">Probably plays an important role in intracellular peptide degradation.</text>
</comment>
<comment type="catalytic activity">
    <reaction evidence="1">
        <text>Release of an N-terminal amino acid, Xaa, from a peptide or arylamide. Xaa is preferably Glu or Asp but may be other amino acids, including Leu, Met, His, Cys and Gln.</text>
        <dbReference type="EC" id="3.4.11.23"/>
    </reaction>
</comment>
<comment type="cofactor">
    <cofactor evidence="1">
        <name>Mn(2+)</name>
        <dbReference type="ChEBI" id="CHEBI:29035"/>
    </cofactor>
    <text evidence="1">Binds 2 manganese ions per subunit.</text>
</comment>
<comment type="subunit">
    <text evidence="1">Homohexamer.</text>
</comment>
<comment type="subcellular location">
    <subcellularLocation>
        <location evidence="1">Cytoplasm</location>
    </subcellularLocation>
</comment>
<comment type="similarity">
    <text evidence="1">Belongs to the peptidase M17 family.</text>
</comment>
<proteinExistence type="inferred from homology"/>
<accession>C4ZX98</accession>